<evidence type="ECO:0000250" key="1">
    <source>
        <dbReference type="UniProtKB" id="G5DBJ0"/>
    </source>
</evidence>
<evidence type="ECO:0000255" key="2"/>
<evidence type="ECO:0000269" key="3">
    <source>
    </source>
</evidence>
<evidence type="ECO:0000269" key="4">
    <source>
    </source>
</evidence>
<evidence type="ECO:0000269" key="5">
    <source>
    </source>
</evidence>
<evidence type="ECO:0000269" key="6">
    <source>
    </source>
</evidence>
<evidence type="ECO:0000303" key="7">
    <source>
    </source>
</evidence>
<evidence type="ECO:0000303" key="8">
    <source>
    </source>
</evidence>
<evidence type="ECO:0000305" key="9"/>
<evidence type="ECO:0000312" key="10">
    <source>
        <dbReference type="Araport" id="AT5G23040"/>
    </source>
</evidence>
<evidence type="ECO:0000312" key="11">
    <source>
        <dbReference type="EMBL" id="BAB09821.1"/>
    </source>
</evidence>
<evidence type="ECO:0000312" key="12">
    <source>
        <dbReference type="Proteomes" id="UP000006548"/>
    </source>
</evidence>
<evidence type="ECO:0007744" key="13">
    <source>
    </source>
</evidence>
<sequence length="258" mass="28816">MSSSLLLSGSTVSSSFIAPSKPSLVRNSSKTSLLPFRNVSRSFKTVKCTVDSSYGGNVPTFPRTRVWDPYKRLGVSPYASEEEIWASRNFLLQQYAGHERSEESIEGAFEKLLMSSFIRRKKTKINLKSKLKKKVEESPPWLKALLDFVEMPPMDTIFRRLFLFAFMGGWSIMNSAEGGPAFQVAVSLAACVYFLNEKTKSLGRACLIGIGALVAGWFCGSLIIPMIPTFLIQPTWTLELLTSLVAYVFLFLSCTFLK</sequence>
<reference key="1">
    <citation type="journal article" date="2005" name="J. Biol. Chem.">
        <title>A novel Arabidopsis gene causes Bax-like lethality in Saccharomyces cerevisiae.</title>
        <authorList>
            <person name="Kawai-Yamada M."/>
            <person name="Saito Y."/>
            <person name="Jin L."/>
            <person name="Ogawa T."/>
            <person name="Kim K.-M."/>
            <person name="Yu L.-H."/>
            <person name="Tone Y."/>
            <person name="Hirata A."/>
            <person name="Umeda M."/>
            <person name="Uchimiya H."/>
        </authorList>
    </citation>
    <scope>NUCLEOTIDE SEQUENCE [MRNA]</scope>
    <scope>FUNCTION</scope>
    <scope>SUBCELLULAR LOCATION</scope>
    <source>
        <tissue>Callus</tissue>
    </source>
</reference>
<reference key="2">
    <citation type="journal article" date="1997" name="DNA Res.">
        <title>Structural analysis of Arabidopsis thaliana chromosome 5. II. Sequence features of the regions of 1,044,062 bp covered by thirteen physically assigned P1 clones.</title>
        <authorList>
            <person name="Kotani H."/>
            <person name="Nakamura Y."/>
            <person name="Sato S."/>
            <person name="Kaneko T."/>
            <person name="Asamizu E."/>
            <person name="Miyajima N."/>
            <person name="Tabata S."/>
        </authorList>
    </citation>
    <scope>NUCLEOTIDE SEQUENCE [LARGE SCALE GENOMIC DNA]</scope>
    <source>
        <strain>cv. Columbia</strain>
    </source>
</reference>
<reference key="3">
    <citation type="journal article" date="2017" name="Plant J.">
        <title>Araport11: a complete reannotation of the Arabidopsis thaliana reference genome.</title>
        <authorList>
            <person name="Cheng C.Y."/>
            <person name="Krishnakumar V."/>
            <person name="Chan A.P."/>
            <person name="Thibaud-Nissen F."/>
            <person name="Schobel S."/>
            <person name="Town C.D."/>
        </authorList>
    </citation>
    <scope>GENOME REANNOTATION</scope>
    <source>
        <strain>cv. Columbia</strain>
    </source>
</reference>
<reference key="4">
    <citation type="journal article" date="2003" name="Science">
        <title>Empirical analysis of transcriptional activity in the Arabidopsis genome.</title>
        <authorList>
            <person name="Yamada K."/>
            <person name="Lim J."/>
            <person name="Dale J.M."/>
            <person name="Chen H."/>
            <person name="Shinn P."/>
            <person name="Palm C.J."/>
            <person name="Southwick A.M."/>
            <person name="Wu H.C."/>
            <person name="Kim C.J."/>
            <person name="Nguyen M."/>
            <person name="Pham P.K."/>
            <person name="Cheuk R.F."/>
            <person name="Karlin-Newmann G."/>
            <person name="Liu S.X."/>
            <person name="Lam B."/>
            <person name="Sakano H."/>
            <person name="Wu T."/>
            <person name="Yu G."/>
            <person name="Miranda M."/>
            <person name="Quach H.L."/>
            <person name="Tripp M."/>
            <person name="Chang C.H."/>
            <person name="Lee J.M."/>
            <person name="Toriumi M.J."/>
            <person name="Chan M.M."/>
            <person name="Tang C.C."/>
            <person name="Onodera C.S."/>
            <person name="Deng J.M."/>
            <person name="Akiyama K."/>
            <person name="Ansari Y."/>
            <person name="Arakawa T."/>
            <person name="Banh J."/>
            <person name="Banno F."/>
            <person name="Bowser L."/>
            <person name="Brooks S.Y."/>
            <person name="Carninci P."/>
            <person name="Chao Q."/>
            <person name="Choy N."/>
            <person name="Enju A."/>
            <person name="Goldsmith A.D."/>
            <person name="Gurjal M."/>
            <person name="Hansen N.F."/>
            <person name="Hayashizaki Y."/>
            <person name="Johnson-Hopson C."/>
            <person name="Hsuan V.W."/>
            <person name="Iida K."/>
            <person name="Karnes M."/>
            <person name="Khan S."/>
            <person name="Koesema E."/>
            <person name="Ishida J."/>
            <person name="Jiang P.X."/>
            <person name="Jones T."/>
            <person name="Kawai J."/>
            <person name="Kamiya A."/>
            <person name="Meyers C."/>
            <person name="Nakajima M."/>
            <person name="Narusaka M."/>
            <person name="Seki M."/>
            <person name="Sakurai T."/>
            <person name="Satou M."/>
            <person name="Tamse R."/>
            <person name="Vaysberg M."/>
            <person name="Wallender E.K."/>
            <person name="Wong C."/>
            <person name="Yamamura Y."/>
            <person name="Yuan S."/>
            <person name="Shinozaki K."/>
            <person name="Davis R.W."/>
            <person name="Theologis A."/>
            <person name="Ecker J.R."/>
        </authorList>
    </citation>
    <scope>NUCLEOTIDE SEQUENCE [LARGE SCALE MRNA]</scope>
    <source>
        <strain>cv. Columbia</strain>
    </source>
</reference>
<reference key="5">
    <citation type="journal article" date="2012" name="Mol. Cell. Proteomics">
        <title>Comparative large-scale characterisation of plant vs. mammal proteins reveals similar and idiosyncratic N-alpha acetylation features.</title>
        <authorList>
            <person name="Bienvenut W.V."/>
            <person name="Sumpton D."/>
            <person name="Martinez A."/>
            <person name="Lilla S."/>
            <person name="Espagne C."/>
            <person name="Meinnel T."/>
            <person name="Giglione C."/>
        </authorList>
    </citation>
    <scope>ACETYLATION [LARGE SCALE ANALYSIS] AT THR-49</scope>
    <scope>CLEAVAGE OF TRANSIT PEPTIDE [LARGE SCALE ANALYSIS] AFTER CYS-48</scope>
    <scope>IDENTIFICATION BY MASS SPECTROMETRY [LARGE SCALE ANALYSIS]</scope>
</reference>
<reference key="6">
    <citation type="journal article" date="2013" name="Plant Cell">
        <title>Cell growth defect factor1/chaperone-like protein of POR1 plays a role in stabilization of light-dependent protochlorophyllide oxidoreductase in Nicotiana benthamiana and Arabidopsis.</title>
        <authorList>
            <person name="Lee J.-Y."/>
            <person name="Lee H.-S."/>
            <person name="Song J.-Y."/>
            <person name="Jung Y.J."/>
            <person name="Reinbothe S."/>
            <person name="Park Y.-I."/>
            <person name="Lee S.Y."/>
            <person name="Pai H.-S."/>
        </authorList>
    </citation>
    <scope>FUNCTION</scope>
    <scope>SUBCELLULAR LOCATION</scope>
    <scope>SUBUNIT</scope>
    <scope>DISRUPTION PHENOTYPE</scope>
    <scope>INTERACTION WITH PORB</scope>
    <source>
        <strain>cv. Columbia</strain>
    </source>
</reference>
<reference key="7">
    <citation type="journal article" date="2014" name="Planta">
        <title>Plastidic protein Cdf1 is essential in Arabidopsis embryogenesis.</title>
        <authorList>
            <person name="Kawai-Yamada M."/>
            <person name="Nagano M."/>
            <person name="Kakimoto M."/>
            <person name="Uchimiya H."/>
        </authorList>
    </citation>
    <scope>FUNCTION</scope>
    <scope>DISRUPTION PHENOTYPE</scope>
    <scope>SUBCELLULAR LOCATION</scope>
    <scope>DEVELOPMENTAL STAGE</scope>
    <scope>TISSUE SPECIFICITY</scope>
    <source>
        <strain>cv. Columbia</strain>
    </source>
</reference>
<reference key="8">
    <citation type="journal article" date="2015" name="Proc. Natl. Acad. Sci. U.S.A.">
        <title>Cell growth defect factor 1 is crucial for the plastid import of NADPH:protochlorophyllide oxidoreductase A in Arabidopsis thaliana.</title>
        <authorList>
            <person name="Reinbothe S."/>
            <person name="Gray J."/>
            <person name="Rustgi S."/>
            <person name="von Wettstein D."/>
            <person name="Reinbothe C."/>
        </authorList>
    </citation>
    <scope>FUNCTION</scope>
    <scope>INTERACTION WITH PORA</scope>
</reference>
<gene>
    <name evidence="8" type="primary">CPP1</name>
    <name evidence="7" type="synonym">CDF1</name>
    <name evidence="10" type="ordered locus">At5g23040</name>
    <name evidence="11" type="ORF">MYJ24.3</name>
</gene>
<comment type="function">
    <text evidence="3 4 5 6">Essential protein required during embryogenesis (PubMed:24097264). Exhibits holdase chaperone activity involved in the stabilization of NADPH:protochlorophyllide oxidoreductase (POR) proteins against photooxidative stress during POR proteins import into chloroplasts. Required for chloroplast biogenesis and development (PubMed:24151298, PubMed:25901327). When expressed in yeast, triggers mitochondria-mediated cell death associated with the loss of mitochondrial membrane potential (PubMed:16192270).</text>
</comment>
<comment type="subunit">
    <text evidence="5 6">Interacts with PORB in chloroplast (PubMed:24151298). Interacts with PORA during plastid import (PubMed:25901327).</text>
</comment>
<comment type="subcellular location">
    <subcellularLocation>
        <location evidence="3">Mitochondrion membrane</location>
        <topology evidence="2">Multi-pass membrane protein</topology>
    </subcellularLocation>
    <subcellularLocation>
        <location evidence="4 5">Plastid</location>
        <location evidence="4 5">Chloroplast envelope</location>
    </subcellularLocation>
    <subcellularLocation>
        <location evidence="5">Plastid</location>
        <location evidence="5">Chloroplast thylakoid membrane</location>
        <topology evidence="2">Multi-pass membrane protein</topology>
    </subcellularLocation>
    <text evidence="3">Targeted to mitochondrion when expressed in yeast.</text>
</comment>
<comment type="tissue specificity">
    <text evidence="4">Expressed ubiquitously with higher levels in young leaves, flowers, and the root elongation zone.</text>
</comment>
<comment type="developmental stage">
    <text evidence="4">Low levels in the globular stage, but accumulates during early heart stage of embryogenesis and remains expressed during all later embryogenesis stages.</text>
</comment>
<comment type="disruption phenotype">
    <text evidence="4 5">Reduced chloroplast biogenesis and chlorophyll synthesis associated with less POR protein accumulation. Photobleaching and growth inhibition of plants under light conditions. In dark-grown plants, reduced POR accumulation in etioplasts and impaired formation of prolamellar bodies, subsequently affecting chloroplast biogenesis upon illumination (PubMed:24151298). Embryo lethal with arrested embryogenesis at the globular stage (PubMed:24097264).</text>
</comment>
<comment type="similarity">
    <text evidence="9">Belongs to the chaperone-like protein of POR1 protein family.</text>
</comment>
<keyword id="KW-0007">Acetylation</keyword>
<keyword id="KW-0143">Chaperone</keyword>
<keyword id="KW-0150">Chloroplast</keyword>
<keyword id="KW-0217">Developmental protein</keyword>
<keyword id="KW-0472">Membrane</keyword>
<keyword id="KW-0496">Mitochondrion</keyword>
<keyword id="KW-0934">Plastid</keyword>
<keyword id="KW-1185">Reference proteome</keyword>
<keyword id="KW-0793">Thylakoid</keyword>
<keyword id="KW-0809">Transit peptide</keyword>
<keyword id="KW-0812">Transmembrane</keyword>
<keyword id="KW-1133">Transmembrane helix</keyword>
<dbReference type="EMBL" id="AB210817">
    <property type="protein sequence ID" value="BAD95465.1"/>
    <property type="molecule type" value="mRNA"/>
</dbReference>
<dbReference type="EMBL" id="AB006708">
    <property type="protein sequence ID" value="BAB09821.1"/>
    <property type="molecule type" value="Genomic_DNA"/>
</dbReference>
<dbReference type="EMBL" id="CP002688">
    <property type="protein sequence ID" value="AED93112.1"/>
    <property type="molecule type" value="Genomic_DNA"/>
</dbReference>
<dbReference type="EMBL" id="CP002688">
    <property type="protein sequence ID" value="ANM70165.1"/>
    <property type="molecule type" value="Genomic_DNA"/>
</dbReference>
<dbReference type="EMBL" id="AY125520">
    <property type="protein sequence ID" value="AAM78111.1"/>
    <property type="molecule type" value="mRNA"/>
</dbReference>
<dbReference type="EMBL" id="AY143835">
    <property type="protein sequence ID" value="AAN28774.1"/>
    <property type="molecule type" value="mRNA"/>
</dbReference>
<dbReference type="RefSeq" id="NP_001331796.1">
    <property type="nucleotide sequence ID" value="NM_001343786.1"/>
</dbReference>
<dbReference type="RefSeq" id="NP_197695.1">
    <property type="nucleotide sequence ID" value="NM_122210.5"/>
</dbReference>
<dbReference type="SMR" id="Q9FN50"/>
<dbReference type="FunCoup" id="Q9FN50">
    <property type="interactions" value="1487"/>
</dbReference>
<dbReference type="STRING" id="3702.Q9FN50"/>
<dbReference type="iPTMnet" id="Q9FN50"/>
<dbReference type="PaxDb" id="3702-AT5G23040.1"/>
<dbReference type="ProteomicsDB" id="220486"/>
<dbReference type="EnsemblPlants" id="AT5G23040.1">
    <property type="protein sequence ID" value="AT5G23040.1"/>
    <property type="gene ID" value="AT5G23040"/>
</dbReference>
<dbReference type="EnsemblPlants" id="AT5G23040.2">
    <property type="protein sequence ID" value="AT5G23040.2"/>
    <property type="gene ID" value="AT5G23040"/>
</dbReference>
<dbReference type="GeneID" id="832368"/>
<dbReference type="Gramene" id="AT5G23040.1">
    <property type="protein sequence ID" value="AT5G23040.1"/>
    <property type="gene ID" value="AT5G23040"/>
</dbReference>
<dbReference type="Gramene" id="AT5G23040.2">
    <property type="protein sequence ID" value="AT5G23040.2"/>
    <property type="gene ID" value="AT5G23040"/>
</dbReference>
<dbReference type="KEGG" id="ath:AT5G23040"/>
<dbReference type="Araport" id="AT5G23040"/>
<dbReference type="TAIR" id="AT5G23040">
    <property type="gene designation" value="CDF1"/>
</dbReference>
<dbReference type="eggNOG" id="ENOG502QRPN">
    <property type="taxonomic scope" value="Eukaryota"/>
</dbReference>
<dbReference type="HOGENOM" id="CLU_064828_2_0_1"/>
<dbReference type="InParanoid" id="Q9FN50"/>
<dbReference type="OMA" id="PMDTIFR"/>
<dbReference type="OrthoDB" id="2014563at2759"/>
<dbReference type="PhylomeDB" id="Q9FN50"/>
<dbReference type="PRO" id="PR:Q9FN50"/>
<dbReference type="Proteomes" id="UP000006548">
    <property type="component" value="Chromosome 5"/>
</dbReference>
<dbReference type="ExpressionAtlas" id="Q9FN50">
    <property type="expression patterns" value="baseline and differential"/>
</dbReference>
<dbReference type="GO" id="GO:0009507">
    <property type="term" value="C:chloroplast"/>
    <property type="evidence" value="ECO:0000314"/>
    <property type="project" value="UniProtKB"/>
</dbReference>
<dbReference type="GO" id="GO:0009941">
    <property type="term" value="C:chloroplast envelope"/>
    <property type="evidence" value="ECO:0000314"/>
    <property type="project" value="UniProtKB"/>
</dbReference>
<dbReference type="GO" id="GO:0009706">
    <property type="term" value="C:chloroplast inner membrane"/>
    <property type="evidence" value="ECO:0000314"/>
    <property type="project" value="TAIR"/>
</dbReference>
<dbReference type="GO" id="GO:0009570">
    <property type="term" value="C:chloroplast stroma"/>
    <property type="evidence" value="ECO:0000314"/>
    <property type="project" value="TAIR"/>
</dbReference>
<dbReference type="GO" id="GO:0009534">
    <property type="term" value="C:chloroplast thylakoid"/>
    <property type="evidence" value="ECO:0000314"/>
    <property type="project" value="TAIR"/>
</dbReference>
<dbReference type="GO" id="GO:0009535">
    <property type="term" value="C:chloroplast thylakoid membrane"/>
    <property type="evidence" value="ECO:0007669"/>
    <property type="project" value="UniProtKB-SubCell"/>
</dbReference>
<dbReference type="GO" id="GO:0031966">
    <property type="term" value="C:mitochondrial membrane"/>
    <property type="evidence" value="ECO:0007669"/>
    <property type="project" value="UniProtKB-SubCell"/>
</dbReference>
<dbReference type="GO" id="GO:0005739">
    <property type="term" value="C:mitochondrion"/>
    <property type="evidence" value="ECO:0000314"/>
    <property type="project" value="TAIR"/>
</dbReference>
<dbReference type="GO" id="GO:0009536">
    <property type="term" value="C:plastid"/>
    <property type="evidence" value="ECO:0007005"/>
    <property type="project" value="TAIR"/>
</dbReference>
<dbReference type="GO" id="GO:0055035">
    <property type="term" value="C:plastid thylakoid membrane"/>
    <property type="evidence" value="ECO:0000314"/>
    <property type="project" value="UniProtKB"/>
</dbReference>
<dbReference type="GO" id="GO:0044183">
    <property type="term" value="F:protein folding chaperone"/>
    <property type="evidence" value="ECO:0000314"/>
    <property type="project" value="TAIR"/>
</dbReference>
<dbReference type="GO" id="GO:0008219">
    <property type="term" value="P:cell death"/>
    <property type="evidence" value="ECO:0000314"/>
    <property type="project" value="TAIR"/>
</dbReference>
<dbReference type="GO" id="GO:0061077">
    <property type="term" value="P:chaperone-mediated protein folding"/>
    <property type="evidence" value="ECO:0000250"/>
    <property type="project" value="UniProtKB"/>
</dbReference>
<dbReference type="GO" id="GO:0009658">
    <property type="term" value="P:chloroplast organization"/>
    <property type="evidence" value="ECO:0000315"/>
    <property type="project" value="UniProtKB"/>
</dbReference>
<dbReference type="GO" id="GO:0009704">
    <property type="term" value="P:de-etiolation"/>
    <property type="evidence" value="ECO:0000315"/>
    <property type="project" value="UniProtKB"/>
</dbReference>
<dbReference type="GO" id="GO:0009793">
    <property type="term" value="P:embryo development ending in seed dormancy"/>
    <property type="evidence" value="ECO:0000315"/>
    <property type="project" value="UniProtKB"/>
</dbReference>
<dbReference type="GO" id="GO:1904216">
    <property type="term" value="P:positive regulation of protein import into chloroplast stroma"/>
    <property type="evidence" value="ECO:0000315"/>
    <property type="project" value="TAIR"/>
</dbReference>
<dbReference type="InterPro" id="IPR021788">
    <property type="entry name" value="CPP1-like"/>
</dbReference>
<dbReference type="PANTHER" id="PTHR33372">
    <property type="match status" value="1"/>
</dbReference>
<dbReference type="PANTHER" id="PTHR33372:SF2">
    <property type="entry name" value="PROTEIN CHAPERONE-LIKE PROTEIN OF POR1, CHLOROPLASTIC"/>
    <property type="match status" value="1"/>
</dbReference>
<dbReference type="Pfam" id="PF11833">
    <property type="entry name" value="CPP1-like"/>
    <property type="match status" value="1"/>
</dbReference>
<organism evidence="12">
    <name type="scientific">Arabidopsis thaliana</name>
    <name type="common">Mouse-ear cress</name>
    <dbReference type="NCBI Taxonomy" id="3702"/>
    <lineage>
        <taxon>Eukaryota</taxon>
        <taxon>Viridiplantae</taxon>
        <taxon>Streptophyta</taxon>
        <taxon>Embryophyta</taxon>
        <taxon>Tracheophyta</taxon>
        <taxon>Spermatophyta</taxon>
        <taxon>Magnoliopsida</taxon>
        <taxon>eudicotyledons</taxon>
        <taxon>Gunneridae</taxon>
        <taxon>Pentapetalae</taxon>
        <taxon>rosids</taxon>
        <taxon>malvids</taxon>
        <taxon>Brassicales</taxon>
        <taxon>Brassicaceae</taxon>
        <taxon>Camelineae</taxon>
        <taxon>Arabidopsis</taxon>
    </lineage>
</organism>
<protein>
    <recommendedName>
        <fullName evidence="8">Protein CHAPERONE-LIKE PROTEIN OF POR1, chloroplastic</fullName>
        <shortName evidence="8">AtCPP1</shortName>
    </recommendedName>
    <alternativeName>
        <fullName evidence="7">Protein CELL GROWTH DEFECT FACTOR 1</fullName>
        <shortName evidence="7">AtCDF1</shortName>
    </alternativeName>
</protein>
<feature type="transit peptide" description="Chloroplast" evidence="13">
    <location>
        <begin position="1"/>
        <end position="48"/>
    </location>
</feature>
<feature type="chain" id="PRO_0000432770" description="Protein CHAPERONE-LIKE PROTEIN OF POR1, chloroplastic" evidence="2">
    <location>
        <begin position="49"/>
        <end position="258"/>
    </location>
</feature>
<feature type="transmembrane region" description="Helical; Name=1" evidence="2">
    <location>
        <begin position="162"/>
        <end position="182"/>
    </location>
</feature>
<feature type="transmembrane region" description="Helical; Name=2" evidence="2">
    <location>
        <begin position="207"/>
        <end position="227"/>
    </location>
</feature>
<feature type="transmembrane region" description="Helical; Name=3" evidence="2">
    <location>
        <begin position="237"/>
        <end position="257"/>
    </location>
</feature>
<feature type="region of interest" description="J-like domain required for holdase chaperone activity" evidence="1">
    <location>
        <begin position="67"/>
        <end position="122"/>
    </location>
</feature>
<feature type="modified residue" description="N-acetylthreonine" evidence="13">
    <location>
        <position position="49"/>
    </location>
</feature>
<proteinExistence type="evidence at protein level"/>
<accession>Q9FN50</accession>
<name>CPP1_ARATH</name>